<gene>
    <name type="primary">Atic</name>
    <name type="synonym">Purh</name>
</gene>
<protein>
    <recommendedName>
        <fullName>Bifunctional purine biosynthesis protein ATIC</fullName>
    </recommendedName>
    <alternativeName>
        <fullName>AICAR transformylase/inosine monophosphate cyclohydrolase</fullName>
        <shortName>ATIC</shortName>
    </alternativeName>
    <domain>
        <recommendedName>
            <fullName>Phosphoribosylaminoimidazolecarboxamide formyltransferase</fullName>
            <ecNumber evidence="5">2.1.2.3</ecNumber>
        </recommendedName>
        <alternativeName>
            <fullName>5-aminoimidazole-4-carboxamide ribonucleotide formyltransferase</fullName>
            <shortName>AICAR formyltransferase</shortName>
        </alternativeName>
        <alternativeName>
            <fullName>AICAR transformylase</fullName>
        </alternativeName>
    </domain>
    <domain>
        <recommendedName>
            <fullName evidence="6">Inosine 5'-monophosphate cyclohydrolase</fullName>
            <shortName evidence="6">IMP cyclohydrolase</shortName>
            <ecNumber evidence="2">3.5.4.10</ecNumber>
        </recommendedName>
        <alternativeName>
            <fullName>IMP synthase</fullName>
        </alternativeName>
        <alternativeName>
            <fullName>Inosinicase</fullName>
        </alternativeName>
    </domain>
</protein>
<reference key="1">
    <citation type="journal article" date="2005" name="Science">
        <title>The transcriptional landscape of the mammalian genome.</title>
        <authorList>
            <person name="Carninci P."/>
            <person name="Kasukawa T."/>
            <person name="Katayama S."/>
            <person name="Gough J."/>
            <person name="Frith M.C."/>
            <person name="Maeda N."/>
            <person name="Oyama R."/>
            <person name="Ravasi T."/>
            <person name="Lenhard B."/>
            <person name="Wells C."/>
            <person name="Kodzius R."/>
            <person name="Shimokawa K."/>
            <person name="Bajic V.B."/>
            <person name="Brenner S.E."/>
            <person name="Batalov S."/>
            <person name="Forrest A.R."/>
            <person name="Zavolan M."/>
            <person name="Davis M.J."/>
            <person name="Wilming L.G."/>
            <person name="Aidinis V."/>
            <person name="Allen J.E."/>
            <person name="Ambesi-Impiombato A."/>
            <person name="Apweiler R."/>
            <person name="Aturaliya R.N."/>
            <person name="Bailey T.L."/>
            <person name="Bansal M."/>
            <person name="Baxter L."/>
            <person name="Beisel K.W."/>
            <person name="Bersano T."/>
            <person name="Bono H."/>
            <person name="Chalk A.M."/>
            <person name="Chiu K.P."/>
            <person name="Choudhary V."/>
            <person name="Christoffels A."/>
            <person name="Clutterbuck D.R."/>
            <person name="Crowe M.L."/>
            <person name="Dalla E."/>
            <person name="Dalrymple B.P."/>
            <person name="de Bono B."/>
            <person name="Della Gatta G."/>
            <person name="di Bernardo D."/>
            <person name="Down T."/>
            <person name="Engstrom P."/>
            <person name="Fagiolini M."/>
            <person name="Faulkner G."/>
            <person name="Fletcher C.F."/>
            <person name="Fukushima T."/>
            <person name="Furuno M."/>
            <person name="Futaki S."/>
            <person name="Gariboldi M."/>
            <person name="Georgii-Hemming P."/>
            <person name="Gingeras T.R."/>
            <person name="Gojobori T."/>
            <person name="Green R.E."/>
            <person name="Gustincich S."/>
            <person name="Harbers M."/>
            <person name="Hayashi Y."/>
            <person name="Hensch T.K."/>
            <person name="Hirokawa N."/>
            <person name="Hill D."/>
            <person name="Huminiecki L."/>
            <person name="Iacono M."/>
            <person name="Ikeo K."/>
            <person name="Iwama A."/>
            <person name="Ishikawa T."/>
            <person name="Jakt M."/>
            <person name="Kanapin A."/>
            <person name="Katoh M."/>
            <person name="Kawasawa Y."/>
            <person name="Kelso J."/>
            <person name="Kitamura H."/>
            <person name="Kitano H."/>
            <person name="Kollias G."/>
            <person name="Krishnan S.P."/>
            <person name="Kruger A."/>
            <person name="Kummerfeld S.K."/>
            <person name="Kurochkin I.V."/>
            <person name="Lareau L.F."/>
            <person name="Lazarevic D."/>
            <person name="Lipovich L."/>
            <person name="Liu J."/>
            <person name="Liuni S."/>
            <person name="McWilliam S."/>
            <person name="Madan Babu M."/>
            <person name="Madera M."/>
            <person name="Marchionni L."/>
            <person name="Matsuda H."/>
            <person name="Matsuzawa S."/>
            <person name="Miki H."/>
            <person name="Mignone F."/>
            <person name="Miyake S."/>
            <person name="Morris K."/>
            <person name="Mottagui-Tabar S."/>
            <person name="Mulder N."/>
            <person name="Nakano N."/>
            <person name="Nakauchi H."/>
            <person name="Ng P."/>
            <person name="Nilsson R."/>
            <person name="Nishiguchi S."/>
            <person name="Nishikawa S."/>
            <person name="Nori F."/>
            <person name="Ohara O."/>
            <person name="Okazaki Y."/>
            <person name="Orlando V."/>
            <person name="Pang K.C."/>
            <person name="Pavan W.J."/>
            <person name="Pavesi G."/>
            <person name="Pesole G."/>
            <person name="Petrovsky N."/>
            <person name="Piazza S."/>
            <person name="Reed J."/>
            <person name="Reid J.F."/>
            <person name="Ring B.Z."/>
            <person name="Ringwald M."/>
            <person name="Rost B."/>
            <person name="Ruan Y."/>
            <person name="Salzberg S.L."/>
            <person name="Sandelin A."/>
            <person name="Schneider C."/>
            <person name="Schoenbach C."/>
            <person name="Sekiguchi K."/>
            <person name="Semple C.A."/>
            <person name="Seno S."/>
            <person name="Sessa L."/>
            <person name="Sheng Y."/>
            <person name="Shibata Y."/>
            <person name="Shimada H."/>
            <person name="Shimada K."/>
            <person name="Silva D."/>
            <person name="Sinclair B."/>
            <person name="Sperling S."/>
            <person name="Stupka E."/>
            <person name="Sugiura K."/>
            <person name="Sultana R."/>
            <person name="Takenaka Y."/>
            <person name="Taki K."/>
            <person name="Tammoja K."/>
            <person name="Tan S.L."/>
            <person name="Tang S."/>
            <person name="Taylor M.S."/>
            <person name="Tegner J."/>
            <person name="Teichmann S.A."/>
            <person name="Ueda H.R."/>
            <person name="van Nimwegen E."/>
            <person name="Verardo R."/>
            <person name="Wei C.L."/>
            <person name="Yagi K."/>
            <person name="Yamanishi H."/>
            <person name="Zabarovsky E."/>
            <person name="Zhu S."/>
            <person name="Zimmer A."/>
            <person name="Hide W."/>
            <person name="Bult C."/>
            <person name="Grimmond S.M."/>
            <person name="Teasdale R.D."/>
            <person name="Liu E.T."/>
            <person name="Brusic V."/>
            <person name="Quackenbush J."/>
            <person name="Wahlestedt C."/>
            <person name="Mattick J.S."/>
            <person name="Hume D.A."/>
            <person name="Kai C."/>
            <person name="Sasaki D."/>
            <person name="Tomaru Y."/>
            <person name="Fukuda S."/>
            <person name="Kanamori-Katayama M."/>
            <person name="Suzuki M."/>
            <person name="Aoki J."/>
            <person name="Arakawa T."/>
            <person name="Iida J."/>
            <person name="Imamura K."/>
            <person name="Itoh M."/>
            <person name="Kato T."/>
            <person name="Kawaji H."/>
            <person name="Kawagashira N."/>
            <person name="Kawashima T."/>
            <person name="Kojima M."/>
            <person name="Kondo S."/>
            <person name="Konno H."/>
            <person name="Nakano K."/>
            <person name="Ninomiya N."/>
            <person name="Nishio T."/>
            <person name="Okada M."/>
            <person name="Plessy C."/>
            <person name="Shibata K."/>
            <person name="Shiraki T."/>
            <person name="Suzuki S."/>
            <person name="Tagami M."/>
            <person name="Waki K."/>
            <person name="Watahiki A."/>
            <person name="Okamura-Oho Y."/>
            <person name="Suzuki H."/>
            <person name="Kawai J."/>
            <person name="Hayashizaki Y."/>
        </authorList>
    </citation>
    <scope>NUCLEOTIDE SEQUENCE [LARGE SCALE MRNA]</scope>
    <source>
        <strain>C57BL/6J</strain>
        <tissue>Cerebellum</tissue>
        <tissue>Corpora quadrigemina</tissue>
        <tissue>Embryonic stem cell</tissue>
    </source>
</reference>
<reference key="2">
    <citation type="journal article" date="2004" name="Genome Res.">
        <title>The status, quality, and expansion of the NIH full-length cDNA project: the Mammalian Gene Collection (MGC).</title>
        <authorList>
            <consortium name="The MGC Project Team"/>
        </authorList>
    </citation>
    <scope>NUCLEOTIDE SEQUENCE [LARGE SCALE MRNA]</scope>
    <source>
        <strain>129</strain>
        <tissue>Mammary tumor</tissue>
    </source>
</reference>
<reference key="3">
    <citation type="submission" date="2007-07" db="UniProtKB">
        <authorList>
            <person name="Lubec G."/>
            <person name="Klug S."/>
            <person name="Friebe K."/>
            <person name="Yang J.W."/>
            <person name="Zigmond M."/>
        </authorList>
    </citation>
    <scope>PROTEIN SEQUENCE OF 98-108; 178-194 AND 531-545</scope>
    <scope>IDENTIFICATION BY MASS SPECTROMETRY</scope>
    <source>
        <tissue>Brain</tissue>
        <tissue>Hippocampus</tissue>
    </source>
</reference>
<reference key="4">
    <citation type="journal article" date="2010" name="Cell">
        <title>A tissue-specific atlas of mouse protein phosphorylation and expression.</title>
        <authorList>
            <person name="Huttlin E.L."/>
            <person name="Jedrychowski M.P."/>
            <person name="Elias J.E."/>
            <person name="Goswami T."/>
            <person name="Rad R."/>
            <person name="Beausoleil S.A."/>
            <person name="Villen J."/>
            <person name="Haas W."/>
            <person name="Sowa M.E."/>
            <person name="Gygi S.P."/>
        </authorList>
    </citation>
    <scope>IDENTIFICATION BY MASS SPECTROMETRY [LARGE SCALE ANALYSIS]</scope>
    <source>
        <tissue>Brain</tissue>
        <tissue>Brown adipose tissue</tissue>
        <tissue>Heart</tissue>
        <tissue>Kidney</tissue>
        <tissue>Liver</tissue>
        <tissue>Lung</tissue>
        <tissue>Pancreas</tissue>
        <tissue>Spleen</tissue>
        <tissue>Testis</tissue>
    </source>
</reference>
<reference key="5">
    <citation type="journal article" date="2017" name="J. Med. Chem.">
        <title>Discovery of LSN 3213128, a Potent and Selective Nonclassical Antifolate Aminoimidazole-4-carboxamide Ribonucleotide Formyltransferase (AICARFT) Inhibitor Effective at Tumor Suppression in a Cancer Xenograft Model.</title>
        <authorList>
            <person name="Fales K.R."/>
            <person name="Njoroge F.G."/>
            <person name="Brooks H.B."/>
            <person name="Thibodeaux S."/>
            <person name="Torrado A."/>
            <person name="Si C."/>
            <person name="Toth J.L."/>
            <person name="Mc Cowan J.R."/>
            <person name="Roth K.D."/>
            <person name="Thrasher K.J."/>
            <person name="Frimpong K."/>
            <person name="Lee M.R."/>
            <person name="Dally R.D."/>
            <person name="Shepherd T.A."/>
            <person name="Durham T.B."/>
            <person name="Margolis B.J."/>
            <person name="Wu Z."/>
            <person name="Wang Y."/>
            <person name="Atwell S."/>
            <person name="Wang J."/>
            <person name="Hui Y.H."/>
            <person name="Meier T.I."/>
            <person name="Konicek S.A."/>
            <person name="Geeganage S."/>
        </authorList>
    </citation>
    <scope>FUNCTION</scope>
    <scope>ACTIVITY REGULATION</scope>
    <scope>CATALYTIC ACTIVITY</scope>
    <scope>PATHWAY</scope>
</reference>
<evidence type="ECO:0000250" key="1">
    <source>
        <dbReference type="UniProtKB" id="P31335"/>
    </source>
</evidence>
<evidence type="ECO:0000250" key="2">
    <source>
        <dbReference type="UniProtKB" id="P31939"/>
    </source>
</evidence>
<evidence type="ECO:0000250" key="3">
    <source>
        <dbReference type="UniProtKB" id="P54113"/>
    </source>
</evidence>
<evidence type="ECO:0000255" key="4">
    <source>
        <dbReference type="PROSITE-ProRule" id="PRU01202"/>
    </source>
</evidence>
<evidence type="ECO:0000269" key="5">
    <source>
    </source>
</evidence>
<evidence type="ECO:0000305" key="6"/>
<organism>
    <name type="scientific">Mus musculus</name>
    <name type="common">Mouse</name>
    <dbReference type="NCBI Taxonomy" id="10090"/>
    <lineage>
        <taxon>Eukaryota</taxon>
        <taxon>Metazoa</taxon>
        <taxon>Chordata</taxon>
        <taxon>Craniata</taxon>
        <taxon>Vertebrata</taxon>
        <taxon>Euteleostomi</taxon>
        <taxon>Mammalia</taxon>
        <taxon>Eutheria</taxon>
        <taxon>Euarchontoglires</taxon>
        <taxon>Glires</taxon>
        <taxon>Rodentia</taxon>
        <taxon>Myomorpha</taxon>
        <taxon>Muroidea</taxon>
        <taxon>Muridae</taxon>
        <taxon>Murinae</taxon>
        <taxon>Mus</taxon>
        <taxon>Mus</taxon>
    </lineage>
</organism>
<accession>Q9CWJ9</accession>
<accession>Q3UTQ3</accession>
<accession>Q80UH0</accession>
<accession>Q8BPF0</accession>
<accession>Q8BQV9</accession>
<accession>Q9CRI1</accession>
<accession>Q9CZW9</accession>
<keyword id="KW-0007">Acetylation</keyword>
<keyword id="KW-0963">Cytoplasm</keyword>
<keyword id="KW-0903">Direct protein sequencing</keyword>
<keyword id="KW-0378">Hydrolase</keyword>
<keyword id="KW-0511">Multifunctional enzyme</keyword>
<keyword id="KW-0658">Purine biosynthesis</keyword>
<keyword id="KW-1185">Reference proteome</keyword>
<keyword id="KW-0808">Transferase</keyword>
<dbReference type="EC" id="2.1.2.3" evidence="5"/>
<dbReference type="EC" id="3.5.4.10" evidence="2"/>
<dbReference type="EMBL" id="AK010449">
    <property type="protein sequence ID" value="BAB26949.3"/>
    <property type="molecule type" value="mRNA"/>
</dbReference>
<dbReference type="EMBL" id="AK010611">
    <property type="protein sequence ID" value="BAB27060.1"/>
    <property type="molecule type" value="mRNA"/>
</dbReference>
<dbReference type="EMBL" id="AK012074">
    <property type="protein sequence ID" value="BAB28011.1"/>
    <property type="status" value="ALT_FRAME"/>
    <property type="molecule type" value="mRNA"/>
</dbReference>
<dbReference type="EMBL" id="AK046353">
    <property type="protein sequence ID" value="BAC32688.1"/>
    <property type="molecule type" value="mRNA"/>
</dbReference>
<dbReference type="EMBL" id="AK076091">
    <property type="protein sequence ID" value="BAC36175.1"/>
    <property type="molecule type" value="mRNA"/>
</dbReference>
<dbReference type="EMBL" id="AK139235">
    <property type="protein sequence ID" value="BAE23927.1"/>
    <property type="molecule type" value="mRNA"/>
</dbReference>
<dbReference type="EMBL" id="BC039925">
    <property type="protein sequence ID" value="AAH39925.2"/>
    <property type="molecule type" value="mRNA"/>
</dbReference>
<dbReference type="CCDS" id="CCDS15030.1"/>
<dbReference type="RefSeq" id="NP_080471.2">
    <property type="nucleotide sequence ID" value="NM_026195.3"/>
</dbReference>
<dbReference type="SMR" id="Q9CWJ9"/>
<dbReference type="BioGRID" id="223864">
    <property type="interactions" value="19"/>
</dbReference>
<dbReference type="FunCoup" id="Q9CWJ9">
    <property type="interactions" value="3259"/>
</dbReference>
<dbReference type="IntAct" id="Q9CWJ9">
    <property type="interactions" value="1"/>
</dbReference>
<dbReference type="STRING" id="10090.ENSMUSP00000027384"/>
<dbReference type="BindingDB" id="Q9CWJ9"/>
<dbReference type="ChEMBL" id="CHEMBL2277"/>
<dbReference type="GlyGen" id="Q9CWJ9">
    <property type="glycosylation" value="1 site, 1 O-linked glycan (1 site)"/>
</dbReference>
<dbReference type="iPTMnet" id="Q9CWJ9"/>
<dbReference type="PhosphoSitePlus" id="Q9CWJ9"/>
<dbReference type="SwissPalm" id="Q9CWJ9"/>
<dbReference type="REPRODUCTION-2DPAGE" id="Q9CWJ9"/>
<dbReference type="CPTAC" id="non-CPTAC-3870"/>
<dbReference type="CPTAC" id="non-CPTAC-3941"/>
<dbReference type="jPOST" id="Q9CWJ9"/>
<dbReference type="PaxDb" id="10090-ENSMUSP00000027384"/>
<dbReference type="PeptideAtlas" id="Q9CWJ9"/>
<dbReference type="ProteomicsDB" id="301954"/>
<dbReference type="Pumba" id="Q9CWJ9"/>
<dbReference type="Antibodypedia" id="4601">
    <property type="antibodies" value="423 antibodies from 37 providers"/>
</dbReference>
<dbReference type="DNASU" id="108147"/>
<dbReference type="Ensembl" id="ENSMUST00000027384.6">
    <property type="protein sequence ID" value="ENSMUSP00000027384.6"/>
    <property type="gene ID" value="ENSMUSG00000026192.14"/>
</dbReference>
<dbReference type="GeneID" id="108147"/>
<dbReference type="KEGG" id="mmu:108147"/>
<dbReference type="UCSC" id="uc007bjs.2">
    <property type="organism name" value="mouse"/>
</dbReference>
<dbReference type="AGR" id="MGI:1351352"/>
<dbReference type="CTD" id="471"/>
<dbReference type="MGI" id="MGI:1351352">
    <property type="gene designation" value="Atic"/>
</dbReference>
<dbReference type="VEuPathDB" id="HostDB:ENSMUSG00000026192"/>
<dbReference type="eggNOG" id="KOG2555">
    <property type="taxonomic scope" value="Eukaryota"/>
</dbReference>
<dbReference type="GeneTree" id="ENSGT00390000004553"/>
<dbReference type="HOGENOM" id="CLU_016316_3_2_1"/>
<dbReference type="InParanoid" id="Q9CWJ9"/>
<dbReference type="OMA" id="IKHNNPC"/>
<dbReference type="OrthoDB" id="6017153at2759"/>
<dbReference type="PhylomeDB" id="Q9CWJ9"/>
<dbReference type="TreeFam" id="TF105642"/>
<dbReference type="Reactome" id="R-MMU-73817">
    <property type="pathway name" value="Purine ribonucleoside monophosphate biosynthesis"/>
</dbReference>
<dbReference type="UniPathway" id="UPA00074">
    <property type="reaction ID" value="UER00133"/>
</dbReference>
<dbReference type="UniPathway" id="UPA00074">
    <property type="reaction ID" value="UER00135"/>
</dbReference>
<dbReference type="BioGRID-ORCS" id="108147">
    <property type="hits" value="23 hits in 79 CRISPR screens"/>
</dbReference>
<dbReference type="ChiTaRS" id="Atic">
    <property type="organism name" value="mouse"/>
</dbReference>
<dbReference type="PRO" id="PR:Q9CWJ9"/>
<dbReference type="Proteomes" id="UP000000589">
    <property type="component" value="Chromosome 1"/>
</dbReference>
<dbReference type="RNAct" id="Q9CWJ9">
    <property type="molecule type" value="protein"/>
</dbReference>
<dbReference type="Bgee" id="ENSMUSG00000026192">
    <property type="expression patterns" value="Expressed in manus and 231 other cell types or tissues"/>
</dbReference>
<dbReference type="GO" id="GO:0005829">
    <property type="term" value="C:cytosol"/>
    <property type="evidence" value="ECO:0007669"/>
    <property type="project" value="UniProtKB-SubCell"/>
</dbReference>
<dbReference type="GO" id="GO:0005739">
    <property type="term" value="C:mitochondrion"/>
    <property type="evidence" value="ECO:0007005"/>
    <property type="project" value="MGI"/>
</dbReference>
<dbReference type="GO" id="GO:0005886">
    <property type="term" value="C:plasma membrane"/>
    <property type="evidence" value="ECO:0007669"/>
    <property type="project" value="Ensembl"/>
</dbReference>
<dbReference type="GO" id="GO:0003937">
    <property type="term" value="F:IMP cyclohydrolase activity"/>
    <property type="evidence" value="ECO:0000315"/>
    <property type="project" value="MGI"/>
</dbReference>
<dbReference type="GO" id="GO:0004643">
    <property type="term" value="F:phosphoribosylaminoimidazolecarboxamide formyltransferase activity"/>
    <property type="evidence" value="ECO:0000315"/>
    <property type="project" value="MGI"/>
</dbReference>
<dbReference type="GO" id="GO:0042803">
    <property type="term" value="F:protein homodimerization activity"/>
    <property type="evidence" value="ECO:0000250"/>
    <property type="project" value="UniProtKB"/>
</dbReference>
<dbReference type="GO" id="GO:0044208">
    <property type="term" value="P:'de novo' AMP biosynthetic process"/>
    <property type="evidence" value="ECO:0000315"/>
    <property type="project" value="MGI"/>
</dbReference>
<dbReference type="GO" id="GO:0006189">
    <property type="term" value="P:'de novo' IMP biosynthetic process"/>
    <property type="evidence" value="ECO:0000315"/>
    <property type="project" value="MGI"/>
</dbReference>
<dbReference type="GO" id="GO:0097294">
    <property type="term" value="P:'de novo' XMP biosynthetic process"/>
    <property type="evidence" value="ECO:0000315"/>
    <property type="project" value="MGI"/>
</dbReference>
<dbReference type="GO" id="GO:0031100">
    <property type="term" value="P:animal organ regeneration"/>
    <property type="evidence" value="ECO:0007669"/>
    <property type="project" value="Ensembl"/>
</dbReference>
<dbReference type="GO" id="GO:0003360">
    <property type="term" value="P:brainstem development"/>
    <property type="evidence" value="ECO:0007669"/>
    <property type="project" value="Ensembl"/>
</dbReference>
<dbReference type="GO" id="GO:0098761">
    <property type="term" value="P:cellular response to interleukin-7"/>
    <property type="evidence" value="ECO:0000314"/>
    <property type="project" value="MGI"/>
</dbReference>
<dbReference type="GO" id="GO:0021549">
    <property type="term" value="P:cerebellum development"/>
    <property type="evidence" value="ECO:0007669"/>
    <property type="project" value="Ensembl"/>
</dbReference>
<dbReference type="GO" id="GO:0021987">
    <property type="term" value="P:cerebral cortex development"/>
    <property type="evidence" value="ECO:0007669"/>
    <property type="project" value="Ensembl"/>
</dbReference>
<dbReference type="GO" id="GO:0046452">
    <property type="term" value="P:dihydrofolate metabolic process"/>
    <property type="evidence" value="ECO:0007669"/>
    <property type="project" value="Ensembl"/>
</dbReference>
<dbReference type="GO" id="GO:0006177">
    <property type="term" value="P:GMP biosynthetic process"/>
    <property type="evidence" value="ECO:0000315"/>
    <property type="project" value="MGI"/>
</dbReference>
<dbReference type="GO" id="GO:0046654">
    <property type="term" value="P:tetrahydrofolate biosynthetic process"/>
    <property type="evidence" value="ECO:0007669"/>
    <property type="project" value="Ensembl"/>
</dbReference>
<dbReference type="CDD" id="cd01421">
    <property type="entry name" value="IMPCH"/>
    <property type="match status" value="1"/>
</dbReference>
<dbReference type="FunFam" id="3.40.50.1380:FF:000003">
    <property type="entry name" value="Bifunctional purine biosynthesis protein"/>
    <property type="match status" value="1"/>
</dbReference>
<dbReference type="FunFam" id="1.10.287.440:FF:000001">
    <property type="entry name" value="Bifunctional purine biosynthesis protein PURH"/>
    <property type="match status" value="1"/>
</dbReference>
<dbReference type="FunFam" id="3.40.140.20:FF:000008">
    <property type="entry name" value="Bifunctional purine biosynthesis protein PURH"/>
    <property type="match status" value="1"/>
</dbReference>
<dbReference type="Gene3D" id="1.10.287.440">
    <property type="match status" value="1"/>
</dbReference>
<dbReference type="Gene3D" id="3.40.140.20">
    <property type="match status" value="2"/>
</dbReference>
<dbReference type="Gene3D" id="3.40.50.1380">
    <property type="entry name" value="Methylglyoxal synthase-like domain"/>
    <property type="match status" value="1"/>
</dbReference>
<dbReference type="HAMAP" id="MF_00139">
    <property type="entry name" value="PurH"/>
    <property type="match status" value="1"/>
</dbReference>
<dbReference type="InterPro" id="IPR024051">
    <property type="entry name" value="AICAR_Tfase_dup_dom_sf"/>
</dbReference>
<dbReference type="InterPro" id="IPR024050">
    <property type="entry name" value="AICAR_Tfase_insert_dom_sf"/>
</dbReference>
<dbReference type="InterPro" id="IPR016193">
    <property type="entry name" value="Cytidine_deaminase-like"/>
</dbReference>
<dbReference type="InterPro" id="IPR011607">
    <property type="entry name" value="MGS-like_dom"/>
</dbReference>
<dbReference type="InterPro" id="IPR036914">
    <property type="entry name" value="MGS-like_dom_sf"/>
</dbReference>
<dbReference type="InterPro" id="IPR002695">
    <property type="entry name" value="PurH-like"/>
</dbReference>
<dbReference type="NCBIfam" id="NF005492">
    <property type="entry name" value="PRK07106.1"/>
    <property type="match status" value="1"/>
</dbReference>
<dbReference type="NCBIfam" id="TIGR00355">
    <property type="entry name" value="purH"/>
    <property type="match status" value="1"/>
</dbReference>
<dbReference type="PANTHER" id="PTHR11692:SF0">
    <property type="entry name" value="BIFUNCTIONAL PURINE BIOSYNTHESIS PROTEIN ATIC"/>
    <property type="match status" value="1"/>
</dbReference>
<dbReference type="PANTHER" id="PTHR11692">
    <property type="entry name" value="BIFUNCTIONAL PURINE BIOSYNTHESIS PROTEIN PURH"/>
    <property type="match status" value="1"/>
</dbReference>
<dbReference type="Pfam" id="PF01808">
    <property type="entry name" value="AICARFT_IMPCHas"/>
    <property type="match status" value="1"/>
</dbReference>
<dbReference type="Pfam" id="PF02142">
    <property type="entry name" value="MGS"/>
    <property type="match status" value="1"/>
</dbReference>
<dbReference type="PIRSF" id="PIRSF000414">
    <property type="entry name" value="AICARFT_IMPCHas"/>
    <property type="match status" value="1"/>
</dbReference>
<dbReference type="SMART" id="SM00798">
    <property type="entry name" value="AICARFT_IMPCHas"/>
    <property type="match status" value="1"/>
</dbReference>
<dbReference type="SMART" id="SM00851">
    <property type="entry name" value="MGS"/>
    <property type="match status" value="1"/>
</dbReference>
<dbReference type="SUPFAM" id="SSF53927">
    <property type="entry name" value="Cytidine deaminase-like"/>
    <property type="match status" value="1"/>
</dbReference>
<dbReference type="SUPFAM" id="SSF52335">
    <property type="entry name" value="Methylglyoxal synthase-like"/>
    <property type="match status" value="1"/>
</dbReference>
<dbReference type="PROSITE" id="PS51855">
    <property type="entry name" value="MGS"/>
    <property type="match status" value="1"/>
</dbReference>
<proteinExistence type="evidence at protein level"/>
<comment type="function">
    <text evidence="2 5">Bifunctional enzyme that catalyzes the last two steps of purine biosynthesis (PubMed:29072452). Acts as a transformylase that incorporates a formyl group to the AMP analog AICAR (5-amino-1-(5-phospho-beta-D-ribosyl)imidazole-4-carboxamide) to produce the intermediate formyl-AICAR (FAICAR) (PubMed:29072452). Also displays cyclohydrolase activity involving the cyclization of FAICAR to inosine monophosphate (IMP). Can use both 10-formyldihydrofolate and 10-formyltetrahydrofolate as the formyl donor in this reaction. Also catalyzes the cyclization of FAICAR to IMP. Promotes insulin receptor/INSR autophosphorylation and is involved in INSR internalization (By similarity).</text>
</comment>
<comment type="catalytic activity">
    <reaction evidence="5">
        <text>(6R)-10-formyltetrahydrofolate + 5-amino-1-(5-phospho-beta-D-ribosyl)imidazole-4-carboxamide = 5-formamido-1-(5-phospho-D-ribosyl)imidazole-4-carboxamide + (6S)-5,6,7,8-tetrahydrofolate</text>
        <dbReference type="Rhea" id="RHEA:22192"/>
        <dbReference type="ChEBI" id="CHEBI:57453"/>
        <dbReference type="ChEBI" id="CHEBI:58467"/>
        <dbReference type="ChEBI" id="CHEBI:58475"/>
        <dbReference type="ChEBI" id="CHEBI:195366"/>
        <dbReference type="EC" id="2.1.2.3"/>
    </reaction>
    <physiologicalReaction direction="left-to-right" evidence="5">
        <dbReference type="Rhea" id="RHEA:22193"/>
    </physiologicalReaction>
</comment>
<comment type="catalytic activity">
    <reaction evidence="2">
        <text>10-formyldihydrofolate + 5-amino-1-(5-phospho-beta-D-ribosyl)imidazole-4-carboxamide = 5-formamido-1-(5-phospho-D-ribosyl)imidazole-4-carboxamide + 7,8-dihydrofolate</text>
        <dbReference type="Rhea" id="RHEA:59144"/>
        <dbReference type="ChEBI" id="CHEBI:57451"/>
        <dbReference type="ChEBI" id="CHEBI:57452"/>
        <dbReference type="ChEBI" id="CHEBI:58467"/>
        <dbReference type="ChEBI" id="CHEBI:58475"/>
    </reaction>
    <physiologicalReaction direction="left-to-right" evidence="2">
        <dbReference type="Rhea" id="RHEA:59145"/>
    </physiologicalReaction>
</comment>
<comment type="catalytic activity">
    <reaction evidence="2">
        <text>IMP + H2O = 5-formamido-1-(5-phospho-D-ribosyl)imidazole-4-carboxamide</text>
        <dbReference type="Rhea" id="RHEA:18445"/>
        <dbReference type="ChEBI" id="CHEBI:15377"/>
        <dbReference type="ChEBI" id="CHEBI:58053"/>
        <dbReference type="ChEBI" id="CHEBI:58467"/>
        <dbReference type="EC" id="3.5.4.10"/>
    </reaction>
    <physiologicalReaction direction="right-to-left" evidence="2">
        <dbReference type="Rhea" id="RHEA:18447"/>
    </physiologicalReaction>
</comment>
<comment type="activity regulation">
    <text evidence="2 5">AMP and XMP inhibit AICAR formyltransferase activity (By similarity). AICAR formyltransferase activity is inhibited by N-(6-fluoro-1-oxo-1,2-dihydroisoquinolin-7-yl)-5- [(3R)-3-hydroxypyrrolidin-1-yl]thiophene-2-sulfonamide (LSN 3213128), which acts as a tumor suppression in cancer cell lines (PubMed:29072452).</text>
</comment>
<comment type="pathway">
    <text evidence="5">Purine metabolism; IMP biosynthesis via de novo pathway; 5-formamido-1-(5-phospho-D-ribosyl)imidazole-4-carboxamide from 5-amino-1-(5-phospho-D-ribosyl)imidazole-4-carboxamide (10-formyl THF route): step 1/1.</text>
</comment>
<comment type="pathway">
    <text evidence="2">Purine metabolism; IMP biosynthesis via de novo pathway; IMP from 5-formamido-1-(5-phospho-D-ribosyl)imidazole-4-carboxamide: step 1/1.</text>
</comment>
<comment type="subunit">
    <text evidence="2">Homodimer. Associates with internalized INSR complexes on Golgi/endosomal membranes. Interacts with INSR; ATIC together with PRKAA2/AMPK2 and HACD3/PTPLAD1 is proposed to be part of a signaling network regulating INSR autophosphorylation and endocytosis.</text>
</comment>
<comment type="subcellular location">
    <subcellularLocation>
        <location evidence="3">Cytoplasm</location>
        <location evidence="3">Cytosol</location>
    </subcellularLocation>
</comment>
<comment type="domain">
    <text evidence="2">The IMP cyclohydrolase activity resides in the N-terminal region.</text>
</comment>
<comment type="miscellaneous">
    <text evidence="2">The de novo purine synthesis pathway includes 10 sequential steps, beginning with phosphoribosyl pyrophosphate and ending with inosine monophosphate (IMP), the first purine compound of the pathway.</text>
</comment>
<comment type="similarity">
    <text evidence="6">Belongs to the PurH family.</text>
</comment>
<comment type="sequence caution" evidence="6">
    <conflict type="frameshift">
        <sequence resource="EMBL-CDS" id="BAB28011"/>
    </conflict>
</comment>
<name>PUR9_MOUSE</name>
<feature type="chain" id="PRO_0000192157" description="Bifunctional purine biosynthesis protein ATIC">
    <location>
        <begin position="1"/>
        <end position="592"/>
    </location>
</feature>
<feature type="domain" description="MGS-like" evidence="4">
    <location>
        <begin position="1"/>
        <end position="146"/>
    </location>
</feature>
<feature type="region of interest" description="IMP cyclohydrolase" evidence="1">
    <location>
        <begin position="1"/>
        <end position="198"/>
    </location>
</feature>
<feature type="region of interest" description="AICAR formyltransferase" evidence="1">
    <location>
        <begin position="199"/>
        <end position="592"/>
    </location>
</feature>
<feature type="active site" description="Proton donor/acceptor; for FAICAR cyclization activity" evidence="2">
    <location>
        <position position="137"/>
    </location>
</feature>
<feature type="active site" description="Proton acceptor; for AICAR formyltransferase activity" evidence="2">
    <location>
        <position position="267"/>
    </location>
</feature>
<feature type="binding site" evidence="2">
    <location>
        <begin position="12"/>
        <end position="14"/>
    </location>
    <ligand>
        <name>IMP</name>
        <dbReference type="ChEBI" id="CHEBI:58053"/>
    </ligand>
</feature>
<feature type="binding site" evidence="2">
    <location>
        <begin position="34"/>
        <end position="37"/>
    </location>
    <ligand>
        <name>IMP</name>
        <dbReference type="ChEBI" id="CHEBI:58053"/>
    </ligand>
</feature>
<feature type="binding site" evidence="2">
    <location>
        <begin position="64"/>
        <end position="67"/>
    </location>
    <ligand>
        <name>IMP</name>
        <dbReference type="ChEBI" id="CHEBI:58053"/>
    </ligand>
</feature>
<feature type="binding site" evidence="2">
    <location>
        <begin position="101"/>
        <end position="102"/>
    </location>
    <ligand>
        <name>IMP</name>
        <dbReference type="ChEBI" id="CHEBI:58053"/>
    </ligand>
</feature>
<feature type="binding site" evidence="2">
    <location>
        <begin position="125"/>
        <end position="126"/>
    </location>
    <ligand>
        <name>IMP</name>
        <dbReference type="ChEBI" id="CHEBI:58053"/>
    </ligand>
</feature>
<feature type="binding site" description="in other chain" evidence="2">
    <location>
        <begin position="207"/>
        <end position="208"/>
    </location>
    <ligand>
        <name>5-amino-1-(5-phospho-beta-D-ribosyl)imidazole-4-carboxamide</name>
        <dbReference type="ChEBI" id="CHEBI:58475"/>
        <note>ligand shared between dimeric partners</note>
    </ligand>
</feature>
<feature type="binding site" description="in other chain" evidence="2">
    <location>
        <position position="267"/>
    </location>
    <ligand>
        <name>5-amino-1-(5-phospho-beta-D-ribosyl)imidazole-4-carboxamide</name>
        <dbReference type="ChEBI" id="CHEBI:58475"/>
        <note>ligand shared between dimeric partners</note>
    </ligand>
</feature>
<feature type="binding site" description="in other chain" evidence="2">
    <location>
        <position position="316"/>
    </location>
    <ligand>
        <name>5-amino-1-(5-phospho-beta-D-ribosyl)imidazole-4-carboxamide</name>
        <dbReference type="ChEBI" id="CHEBI:58475"/>
        <note>ligand shared between dimeric partners</note>
    </ligand>
</feature>
<feature type="binding site" description="in other chain" evidence="2">
    <location>
        <position position="339"/>
    </location>
    <ligand>
        <name>5-amino-1-(5-phospho-beta-D-ribosyl)imidazole-4-carboxamide</name>
        <dbReference type="ChEBI" id="CHEBI:58475"/>
        <note>ligand shared between dimeric partners</note>
    </ligand>
</feature>
<feature type="binding site" evidence="2">
    <location>
        <position position="431"/>
    </location>
    <ligand>
        <name>5-amino-1-(5-phospho-beta-D-ribosyl)imidazole-4-carboxamide</name>
        <dbReference type="ChEBI" id="CHEBI:58475"/>
        <note>ligand shared between dimeric partners</note>
    </ligand>
</feature>
<feature type="binding site" evidence="2">
    <location>
        <position position="451"/>
    </location>
    <ligand>
        <name>5-amino-1-(5-phospho-beta-D-ribosyl)imidazole-4-carboxamide</name>
        <dbReference type="ChEBI" id="CHEBI:58475"/>
        <note>ligand shared between dimeric partners</note>
    </ligand>
</feature>
<feature type="binding site" evidence="1">
    <location>
        <position position="452"/>
    </location>
    <ligand>
        <name>(6R)-10-formyltetrahydrofolate</name>
        <dbReference type="ChEBI" id="CHEBI:195366"/>
    </ligand>
</feature>
<feature type="binding site" evidence="2">
    <location>
        <position position="541"/>
    </location>
    <ligand>
        <name>5-amino-1-(5-phospho-beta-D-ribosyl)imidazole-4-carboxamide</name>
        <dbReference type="ChEBI" id="CHEBI:58475"/>
        <note>ligand shared between dimeric partners</note>
    </ligand>
</feature>
<feature type="binding site" evidence="1">
    <location>
        <position position="546"/>
    </location>
    <ligand>
        <name>(6R)-10-formyltetrahydrofolate</name>
        <dbReference type="ChEBI" id="CHEBI:195366"/>
    </ligand>
</feature>
<feature type="binding site" evidence="1">
    <location>
        <begin position="565"/>
        <end position="566"/>
    </location>
    <ligand>
        <name>(6R)-10-formyltetrahydrofolate</name>
        <dbReference type="ChEBI" id="CHEBI:195366"/>
    </ligand>
</feature>
<feature type="binding site" evidence="2">
    <location>
        <position position="588"/>
    </location>
    <ligand>
        <name>5-amino-1-(5-phospho-beta-D-ribosyl)imidazole-4-carboxamide</name>
        <dbReference type="ChEBI" id="CHEBI:58475"/>
        <note>ligand shared between dimeric partners</note>
    </ligand>
</feature>
<feature type="site" description="Transition state stabilizer" evidence="2">
    <location>
        <position position="266"/>
    </location>
</feature>
<feature type="modified residue" description="N-acetylmethionine" evidence="2">
    <location>
        <position position="1"/>
    </location>
</feature>
<feature type="modified residue" description="N6-acetyllysine" evidence="2">
    <location>
        <position position="199"/>
    </location>
</feature>
<feature type="sequence conflict" description="In Ref. 1; BAB26949." evidence="6" ref="1">
    <original>R</original>
    <variation>K</variation>
    <location>
        <position position="22"/>
    </location>
</feature>
<feature type="sequence conflict" description="In Ref. 1; BAE23927." evidence="6" ref="1">
    <original>A</original>
    <variation>T</variation>
    <location>
        <position position="183"/>
    </location>
</feature>
<feature type="sequence conflict" description="In Ref. 2; AAH39925." evidence="6" ref="2">
    <original>L</original>
    <variation>S</variation>
    <location>
        <position position="219"/>
    </location>
</feature>
<feature type="sequence conflict" description="In Ref. 1; BAB27060." evidence="6" ref="1">
    <original>Y</original>
    <variation>C</variation>
    <location>
        <position position="371"/>
    </location>
</feature>
<sequence length="592" mass="64217">MAPSQLALFSVSDKTGLVEFARSLASLGLSLVASGGTAKAIRDAGLAVRDVSELTGFPEMLGGRVKTLHPAVHAGILARNIPEDAADMARLDFNLVRVVVCNLYPFVKTVASPDVTVEAAVEQIDIGGVTLLRAAAKNHARVTVVCEPEDYAGVAAEMHGSDSKDTSLETRRHLALKAFTHTAQYDEAISDYFRKQYSKGISQMPLRYGMNPHQTPAQLYTLKPKLPITVLNGAPGFINLCDALNAWQLVTELRGAVDIPAAASFKHVSPAGAAVGVPLSEDEARVCMVYDLYPTLTPLAVAYARARGADRMSSFGDFVALSDICDVPTAKIISREVSDGIVAPGYEEEALKILSKKKNGNYCVLQMDQSYKPDENEVRTLFGLRLSQKRNNGVVDKSLFSNIVTKNKDLPESALRDLIVATVAVKYTQSNSVCYAKDGQVIGIGAGQQSRIHCTRLAGDKANSWWLRHHPRVLSMKFKAGVKRAEISNAIDQYVTGTIGEGEDLVKWEALFEEVPELLTEAEKKEWVDKLSGVSVSSDAFFPFRDNVDRAKRSGVAYIVAPSGSTADKVVIEACDELGIVLAHTDLRLFHH</sequence>